<proteinExistence type="inferred from homology"/>
<keyword id="KW-0067">ATP-binding</keyword>
<keyword id="KW-0460">Magnesium</keyword>
<keyword id="KW-0547">Nucleotide-binding</keyword>
<keyword id="KW-1185">Reference proteome</keyword>
<keyword id="KW-0808">Transferase</keyword>
<keyword id="KW-0819">tRNA processing</keyword>
<dbReference type="EC" id="2.5.1.75" evidence="1"/>
<dbReference type="EMBL" id="CP000673">
    <property type="protein sequence ID" value="EDK33618.1"/>
    <property type="molecule type" value="Genomic_DNA"/>
</dbReference>
<dbReference type="RefSeq" id="WP_012101971.1">
    <property type="nucleotide sequence ID" value="NC_009706.1"/>
</dbReference>
<dbReference type="SMR" id="A5N8I7"/>
<dbReference type="STRING" id="431943.CKL_1576"/>
<dbReference type="KEGG" id="ckl:CKL_1576"/>
<dbReference type="eggNOG" id="COG0324">
    <property type="taxonomic scope" value="Bacteria"/>
</dbReference>
<dbReference type="HOGENOM" id="CLU_032616_0_1_9"/>
<dbReference type="Proteomes" id="UP000002411">
    <property type="component" value="Chromosome"/>
</dbReference>
<dbReference type="GO" id="GO:0005524">
    <property type="term" value="F:ATP binding"/>
    <property type="evidence" value="ECO:0007669"/>
    <property type="project" value="UniProtKB-UniRule"/>
</dbReference>
<dbReference type="GO" id="GO:0052381">
    <property type="term" value="F:tRNA dimethylallyltransferase activity"/>
    <property type="evidence" value="ECO:0007669"/>
    <property type="project" value="UniProtKB-UniRule"/>
</dbReference>
<dbReference type="GO" id="GO:0006400">
    <property type="term" value="P:tRNA modification"/>
    <property type="evidence" value="ECO:0007669"/>
    <property type="project" value="TreeGrafter"/>
</dbReference>
<dbReference type="Gene3D" id="1.10.20.140">
    <property type="match status" value="1"/>
</dbReference>
<dbReference type="Gene3D" id="3.40.50.300">
    <property type="entry name" value="P-loop containing nucleotide triphosphate hydrolases"/>
    <property type="match status" value="1"/>
</dbReference>
<dbReference type="HAMAP" id="MF_00185">
    <property type="entry name" value="IPP_trans"/>
    <property type="match status" value="1"/>
</dbReference>
<dbReference type="InterPro" id="IPR039657">
    <property type="entry name" value="Dimethylallyltransferase"/>
</dbReference>
<dbReference type="InterPro" id="IPR018022">
    <property type="entry name" value="IPT"/>
</dbReference>
<dbReference type="InterPro" id="IPR027417">
    <property type="entry name" value="P-loop_NTPase"/>
</dbReference>
<dbReference type="NCBIfam" id="TIGR00174">
    <property type="entry name" value="miaA"/>
    <property type="match status" value="1"/>
</dbReference>
<dbReference type="PANTHER" id="PTHR11088">
    <property type="entry name" value="TRNA DIMETHYLALLYLTRANSFERASE"/>
    <property type="match status" value="1"/>
</dbReference>
<dbReference type="PANTHER" id="PTHR11088:SF60">
    <property type="entry name" value="TRNA DIMETHYLALLYLTRANSFERASE"/>
    <property type="match status" value="1"/>
</dbReference>
<dbReference type="Pfam" id="PF01715">
    <property type="entry name" value="IPPT"/>
    <property type="match status" value="1"/>
</dbReference>
<dbReference type="SUPFAM" id="SSF52540">
    <property type="entry name" value="P-loop containing nucleoside triphosphate hydrolases"/>
    <property type="match status" value="2"/>
</dbReference>
<evidence type="ECO:0000255" key="1">
    <source>
        <dbReference type="HAMAP-Rule" id="MF_00185"/>
    </source>
</evidence>
<accession>A5N8I7</accession>
<organism>
    <name type="scientific">Clostridium kluyveri (strain ATCC 8527 / DSM 555 / NBRC 12016 / NCIMB 10680 / K1)</name>
    <dbReference type="NCBI Taxonomy" id="431943"/>
    <lineage>
        <taxon>Bacteria</taxon>
        <taxon>Bacillati</taxon>
        <taxon>Bacillota</taxon>
        <taxon>Clostridia</taxon>
        <taxon>Eubacteriales</taxon>
        <taxon>Clostridiaceae</taxon>
        <taxon>Clostridium</taxon>
    </lineage>
</organism>
<gene>
    <name evidence="1" type="primary">miaA</name>
    <name type="ordered locus">CKL_1576</name>
</gene>
<feature type="chain" id="PRO_1000077391" description="tRNA dimethylallyltransferase">
    <location>
        <begin position="1"/>
        <end position="309"/>
    </location>
</feature>
<feature type="region of interest" description="Interaction with substrate tRNA" evidence="1">
    <location>
        <begin position="34"/>
        <end position="37"/>
    </location>
</feature>
<feature type="binding site" evidence="1">
    <location>
        <begin position="9"/>
        <end position="16"/>
    </location>
    <ligand>
        <name>ATP</name>
        <dbReference type="ChEBI" id="CHEBI:30616"/>
    </ligand>
</feature>
<feature type="binding site" evidence="1">
    <location>
        <begin position="11"/>
        <end position="16"/>
    </location>
    <ligand>
        <name>substrate</name>
    </ligand>
</feature>
<feature type="site" description="Interaction with substrate tRNA" evidence="1">
    <location>
        <position position="100"/>
    </location>
</feature>
<feature type="site" description="Interaction with substrate tRNA" evidence="1">
    <location>
        <position position="123"/>
    </location>
</feature>
<comment type="function">
    <text evidence="1">Catalyzes the transfer of a dimethylallyl group onto the adenine at position 37 in tRNAs that read codons beginning with uridine, leading to the formation of N6-(dimethylallyl)adenosine (i(6)A).</text>
</comment>
<comment type="catalytic activity">
    <reaction evidence="1">
        <text>adenosine(37) in tRNA + dimethylallyl diphosphate = N(6)-dimethylallyladenosine(37) in tRNA + diphosphate</text>
        <dbReference type="Rhea" id="RHEA:26482"/>
        <dbReference type="Rhea" id="RHEA-COMP:10162"/>
        <dbReference type="Rhea" id="RHEA-COMP:10375"/>
        <dbReference type="ChEBI" id="CHEBI:33019"/>
        <dbReference type="ChEBI" id="CHEBI:57623"/>
        <dbReference type="ChEBI" id="CHEBI:74411"/>
        <dbReference type="ChEBI" id="CHEBI:74415"/>
        <dbReference type="EC" id="2.5.1.75"/>
    </reaction>
</comment>
<comment type="cofactor">
    <cofactor evidence="1">
        <name>Mg(2+)</name>
        <dbReference type="ChEBI" id="CHEBI:18420"/>
    </cofactor>
</comment>
<comment type="subunit">
    <text evidence="1">Monomer.</text>
</comment>
<comment type="similarity">
    <text evidence="1">Belongs to the IPP transferase family.</text>
</comment>
<protein>
    <recommendedName>
        <fullName evidence="1">tRNA dimethylallyltransferase</fullName>
        <ecNumber evidence="1">2.5.1.75</ecNumber>
    </recommendedName>
    <alternativeName>
        <fullName evidence="1">Dimethylallyl diphosphate:tRNA dimethylallyltransferase</fullName>
        <shortName evidence="1">DMAPP:tRNA dimethylallyltransferase</shortName>
        <shortName evidence="1">DMATase</shortName>
    </alternativeName>
    <alternativeName>
        <fullName evidence="1">Isopentenyl-diphosphate:tRNA isopentenyltransferase</fullName>
        <shortName evidence="1">IPP transferase</shortName>
        <shortName evidence="1">IPPT</shortName>
        <shortName evidence="1">IPTase</shortName>
    </alternativeName>
</protein>
<reference key="1">
    <citation type="journal article" date="2008" name="Proc. Natl. Acad. Sci. U.S.A.">
        <title>The genome of Clostridium kluyveri, a strict anaerobe with unique metabolic features.</title>
        <authorList>
            <person name="Seedorf H."/>
            <person name="Fricke W.F."/>
            <person name="Veith B."/>
            <person name="Brueggemann H."/>
            <person name="Liesegang H."/>
            <person name="Strittmatter A."/>
            <person name="Miethke M."/>
            <person name="Buckel W."/>
            <person name="Hinderberger J."/>
            <person name="Li F."/>
            <person name="Hagemeier C."/>
            <person name="Thauer R.K."/>
            <person name="Gottschalk G."/>
        </authorList>
    </citation>
    <scope>NUCLEOTIDE SEQUENCE [LARGE SCALE GENOMIC DNA]</scope>
    <source>
        <strain>ATCC 8527 / DSM 555 / NBRC 12016 / NCIMB 10680 / K1</strain>
    </source>
</reference>
<sequence length="309" mass="36017">MKKLFILAGPTAVGKTDISIEVAKKIDGEIISADSMQIYKYMNIGSAKITKGEMQEIPHYLIDIIDPKENFNVSRYKNLAEKTIEDIYSRNKFPMLVGGTGLYINSLICNYDFTDAKVDVNYRNYLENLAKVQGREYVHSLLKDIDAVSYERLYPNDLKRVVRALEVHKLTGKTIGEFNSKDSLYDIPYKIYYFVLNMDRVKLYERINKRVDLMIEQGLIDEVKNLRSMGYTKDMQSMKGIGYKELIRYLEGDISLDEAVYLIKKGSRNYAKRQLTWFRKDERVIWVNKDEFTSNKEIVNYIINTLVTC</sequence>
<name>MIAA_CLOK5</name>